<accession>Q8WWB7</accession>
<accession>A6NH16</accession>
<accession>B4DJN4</accession>
<accession>Q5SZX4</accession>
<accession>Q6UX96</accession>
<accession>Q8IV07</accession>
<accession>Q96F65</accession>
<keyword id="KW-0025">Alternative splicing</keyword>
<keyword id="KW-0325">Glycoprotein</keyword>
<keyword id="KW-0458">Lysosome</keyword>
<keyword id="KW-0472">Membrane</keyword>
<keyword id="KW-1267">Proteomics identification</keyword>
<keyword id="KW-1185">Reference proteome</keyword>
<keyword id="KW-0732">Signal</keyword>
<keyword id="KW-0812">Transmembrane</keyword>
<keyword id="KW-1133">Transmembrane helix</keyword>
<comment type="function">
    <text evidence="1">Required to protect lysosomal transporter MFSD1 from lysosomal proteolysis and for MFSD1 lysosomal localization.</text>
</comment>
<comment type="subunit">
    <text evidence="1">Interacts (via lumenal domain) with lysosomal protein MFSD1; the interaction starts while both proteins are still in the endoplasmic reticulum and is required for stabilization of MFSD1 in lysosomes but has no direct effect on its targeting to lysosomes or transporter activity.</text>
</comment>
<comment type="subcellular location">
    <subcellularLocation>
        <location evidence="5 6">Lysosome membrane</location>
        <topology evidence="2">Single-pass type I membrane protein</topology>
        <orientation evidence="8">Lumenal side</orientation>
    </subcellularLocation>
</comment>
<comment type="alternative products">
    <event type="alternative splicing"/>
    <isoform>
        <id>Q8WWB7-1</id>
        <name>1</name>
        <sequence type="displayed"/>
    </isoform>
    <isoform>
        <id>Q8WWB7-2</id>
        <name>2</name>
        <sequence type="described" ref="VSP_037842"/>
    </isoform>
</comment>
<comment type="induction">
    <text evidence="6">Transcription is activated by TFEB.</text>
</comment>
<comment type="PTM">
    <text evidence="1">Highly N-glycosylated. N-glycosylation is essential for GLMP stability and for MFSD1 lysosomal localization.</text>
</comment>
<comment type="similarity">
    <text evidence="8">Belongs to the GLMP family.</text>
</comment>
<comment type="caution">
    <text evidence="8">According to PubMed:18021396, it binds DNA and acts as a transcription factor. However, the localization in lysosomes which was confirmed by different groups and the presence of transmembrane region strongly suggests that it does not have coactivator activity.</text>
</comment>
<comment type="sequence caution" evidence="8">
    <conflict type="erroneous initiation">
        <sequence resource="EMBL-CDS" id="AAH11575"/>
    </conflict>
</comment>
<gene>
    <name evidence="9" type="primary">GLMP</name>
    <name evidence="9" type="synonym">C1orf85</name>
    <name type="ORF">PSEC0030</name>
    <name type="ORF">UNQ2553/PRO6182</name>
</gene>
<reference key="1">
    <citation type="journal article" date="2003" name="Genome Res.">
        <title>The secreted protein discovery initiative (SPDI), a large-scale effort to identify novel human secreted and transmembrane proteins: a bioinformatics assessment.</title>
        <authorList>
            <person name="Clark H.F."/>
            <person name="Gurney A.L."/>
            <person name="Abaya E."/>
            <person name="Baker K."/>
            <person name="Baldwin D.T."/>
            <person name="Brush J."/>
            <person name="Chen J."/>
            <person name="Chow B."/>
            <person name="Chui C."/>
            <person name="Crowley C."/>
            <person name="Currell B."/>
            <person name="Deuel B."/>
            <person name="Dowd P."/>
            <person name="Eaton D."/>
            <person name="Foster J.S."/>
            <person name="Grimaldi C."/>
            <person name="Gu Q."/>
            <person name="Hass P.E."/>
            <person name="Heldens S."/>
            <person name="Huang A."/>
            <person name="Kim H.S."/>
            <person name="Klimowski L."/>
            <person name="Jin Y."/>
            <person name="Johnson S."/>
            <person name="Lee J."/>
            <person name="Lewis L."/>
            <person name="Liao D."/>
            <person name="Mark M.R."/>
            <person name="Robbie E."/>
            <person name="Sanchez C."/>
            <person name="Schoenfeld J."/>
            <person name="Seshagiri S."/>
            <person name="Simmons L."/>
            <person name="Singh J."/>
            <person name="Smith V."/>
            <person name="Stinson J."/>
            <person name="Vagts A."/>
            <person name="Vandlen R.L."/>
            <person name="Watanabe C."/>
            <person name="Wieand D."/>
            <person name="Woods K."/>
            <person name="Xie M.-H."/>
            <person name="Yansura D.G."/>
            <person name="Yi S."/>
            <person name="Yu G."/>
            <person name="Yuan J."/>
            <person name="Zhang M."/>
            <person name="Zhang Z."/>
            <person name="Goddard A.D."/>
            <person name="Wood W.I."/>
            <person name="Godowski P.J."/>
            <person name="Gray A.M."/>
        </authorList>
    </citation>
    <scope>NUCLEOTIDE SEQUENCE [LARGE SCALE MRNA] (ISOFORM 1)</scope>
    <scope>VARIANT ILE-94</scope>
</reference>
<reference key="2">
    <citation type="journal article" date="2005" name="DNA Res.">
        <title>Signal sequence and keyword trap in silico for selection of full-length human cDNAs encoding secretion or membrane proteins from oligo-capped cDNA libraries.</title>
        <authorList>
            <person name="Otsuki T."/>
            <person name="Ota T."/>
            <person name="Nishikawa T."/>
            <person name="Hayashi K."/>
            <person name="Suzuki Y."/>
            <person name="Yamamoto J."/>
            <person name="Wakamatsu A."/>
            <person name="Kimura K."/>
            <person name="Sakamoto K."/>
            <person name="Hatano N."/>
            <person name="Kawai Y."/>
            <person name="Ishii S."/>
            <person name="Saito K."/>
            <person name="Kojima S."/>
            <person name="Sugiyama T."/>
            <person name="Ono T."/>
            <person name="Okano K."/>
            <person name="Yoshikawa Y."/>
            <person name="Aotsuka S."/>
            <person name="Sasaki N."/>
            <person name="Hattori A."/>
            <person name="Okumura K."/>
            <person name="Nagai K."/>
            <person name="Sugano S."/>
            <person name="Isogai T."/>
        </authorList>
    </citation>
    <scope>NUCLEOTIDE SEQUENCE [LARGE SCALE MRNA] (ISOFORM 1)</scope>
    <source>
        <tissue>Teratocarcinoma</tissue>
    </source>
</reference>
<reference key="3">
    <citation type="journal article" date="2004" name="Nat. Genet.">
        <title>Complete sequencing and characterization of 21,243 full-length human cDNAs.</title>
        <authorList>
            <person name="Ota T."/>
            <person name="Suzuki Y."/>
            <person name="Nishikawa T."/>
            <person name="Otsuki T."/>
            <person name="Sugiyama T."/>
            <person name="Irie R."/>
            <person name="Wakamatsu A."/>
            <person name="Hayashi K."/>
            <person name="Sato H."/>
            <person name="Nagai K."/>
            <person name="Kimura K."/>
            <person name="Makita H."/>
            <person name="Sekine M."/>
            <person name="Obayashi M."/>
            <person name="Nishi T."/>
            <person name="Shibahara T."/>
            <person name="Tanaka T."/>
            <person name="Ishii S."/>
            <person name="Yamamoto J."/>
            <person name="Saito K."/>
            <person name="Kawai Y."/>
            <person name="Isono Y."/>
            <person name="Nakamura Y."/>
            <person name="Nagahari K."/>
            <person name="Murakami K."/>
            <person name="Yasuda T."/>
            <person name="Iwayanagi T."/>
            <person name="Wagatsuma M."/>
            <person name="Shiratori A."/>
            <person name="Sudo H."/>
            <person name="Hosoiri T."/>
            <person name="Kaku Y."/>
            <person name="Kodaira H."/>
            <person name="Kondo H."/>
            <person name="Sugawara M."/>
            <person name="Takahashi M."/>
            <person name="Kanda K."/>
            <person name="Yokoi T."/>
            <person name="Furuya T."/>
            <person name="Kikkawa E."/>
            <person name="Omura Y."/>
            <person name="Abe K."/>
            <person name="Kamihara K."/>
            <person name="Katsuta N."/>
            <person name="Sato K."/>
            <person name="Tanikawa M."/>
            <person name="Yamazaki M."/>
            <person name="Ninomiya K."/>
            <person name="Ishibashi T."/>
            <person name="Yamashita H."/>
            <person name="Murakawa K."/>
            <person name="Fujimori K."/>
            <person name="Tanai H."/>
            <person name="Kimata M."/>
            <person name="Watanabe M."/>
            <person name="Hiraoka S."/>
            <person name="Chiba Y."/>
            <person name="Ishida S."/>
            <person name="Ono Y."/>
            <person name="Takiguchi S."/>
            <person name="Watanabe S."/>
            <person name="Yosida M."/>
            <person name="Hotuta T."/>
            <person name="Kusano J."/>
            <person name="Kanehori K."/>
            <person name="Takahashi-Fujii A."/>
            <person name="Hara H."/>
            <person name="Tanase T.-O."/>
            <person name="Nomura Y."/>
            <person name="Togiya S."/>
            <person name="Komai F."/>
            <person name="Hara R."/>
            <person name="Takeuchi K."/>
            <person name="Arita M."/>
            <person name="Imose N."/>
            <person name="Musashino K."/>
            <person name="Yuuki H."/>
            <person name="Oshima A."/>
            <person name="Sasaki N."/>
            <person name="Aotsuka S."/>
            <person name="Yoshikawa Y."/>
            <person name="Matsunawa H."/>
            <person name="Ichihara T."/>
            <person name="Shiohata N."/>
            <person name="Sano S."/>
            <person name="Moriya S."/>
            <person name="Momiyama H."/>
            <person name="Satoh N."/>
            <person name="Takami S."/>
            <person name="Terashima Y."/>
            <person name="Suzuki O."/>
            <person name="Nakagawa S."/>
            <person name="Senoh A."/>
            <person name="Mizoguchi H."/>
            <person name="Goto Y."/>
            <person name="Shimizu F."/>
            <person name="Wakebe H."/>
            <person name="Hishigaki H."/>
            <person name="Watanabe T."/>
            <person name="Sugiyama A."/>
            <person name="Takemoto M."/>
            <person name="Kawakami B."/>
            <person name="Yamazaki M."/>
            <person name="Watanabe K."/>
            <person name="Kumagai A."/>
            <person name="Itakura S."/>
            <person name="Fukuzumi Y."/>
            <person name="Fujimori Y."/>
            <person name="Komiyama M."/>
            <person name="Tashiro H."/>
            <person name="Tanigami A."/>
            <person name="Fujiwara T."/>
            <person name="Ono T."/>
            <person name="Yamada K."/>
            <person name="Fujii Y."/>
            <person name="Ozaki K."/>
            <person name="Hirao M."/>
            <person name="Ohmori Y."/>
            <person name="Kawabata A."/>
            <person name="Hikiji T."/>
            <person name="Kobatake N."/>
            <person name="Inagaki H."/>
            <person name="Ikema Y."/>
            <person name="Okamoto S."/>
            <person name="Okitani R."/>
            <person name="Kawakami T."/>
            <person name="Noguchi S."/>
            <person name="Itoh T."/>
            <person name="Shigeta K."/>
            <person name="Senba T."/>
            <person name="Matsumura K."/>
            <person name="Nakajima Y."/>
            <person name="Mizuno T."/>
            <person name="Morinaga M."/>
            <person name="Sasaki M."/>
            <person name="Togashi T."/>
            <person name="Oyama M."/>
            <person name="Hata H."/>
            <person name="Watanabe M."/>
            <person name="Komatsu T."/>
            <person name="Mizushima-Sugano J."/>
            <person name="Satoh T."/>
            <person name="Shirai Y."/>
            <person name="Takahashi Y."/>
            <person name="Nakagawa K."/>
            <person name="Okumura K."/>
            <person name="Nagase T."/>
            <person name="Nomura N."/>
            <person name="Kikuchi H."/>
            <person name="Masuho Y."/>
            <person name="Yamashita R."/>
            <person name="Nakai K."/>
            <person name="Yada T."/>
            <person name="Nakamura Y."/>
            <person name="Ohara O."/>
            <person name="Isogai T."/>
            <person name="Sugano S."/>
        </authorList>
    </citation>
    <scope>NUCLEOTIDE SEQUENCE [LARGE SCALE MRNA] (ISOFORM 2)</scope>
    <source>
        <tissue>Thalamus</tissue>
    </source>
</reference>
<reference key="4">
    <citation type="journal article" date="2006" name="Nature">
        <title>The DNA sequence and biological annotation of human chromosome 1.</title>
        <authorList>
            <person name="Gregory S.G."/>
            <person name="Barlow K.F."/>
            <person name="McLay K.E."/>
            <person name="Kaul R."/>
            <person name="Swarbreck D."/>
            <person name="Dunham A."/>
            <person name="Scott C.E."/>
            <person name="Howe K.L."/>
            <person name="Woodfine K."/>
            <person name="Spencer C.C.A."/>
            <person name="Jones M.C."/>
            <person name="Gillson C."/>
            <person name="Searle S."/>
            <person name="Zhou Y."/>
            <person name="Kokocinski F."/>
            <person name="McDonald L."/>
            <person name="Evans R."/>
            <person name="Phillips K."/>
            <person name="Atkinson A."/>
            <person name="Cooper R."/>
            <person name="Jones C."/>
            <person name="Hall R.E."/>
            <person name="Andrews T.D."/>
            <person name="Lloyd C."/>
            <person name="Ainscough R."/>
            <person name="Almeida J.P."/>
            <person name="Ambrose K.D."/>
            <person name="Anderson F."/>
            <person name="Andrew R.W."/>
            <person name="Ashwell R.I.S."/>
            <person name="Aubin K."/>
            <person name="Babbage A.K."/>
            <person name="Bagguley C.L."/>
            <person name="Bailey J."/>
            <person name="Beasley H."/>
            <person name="Bethel G."/>
            <person name="Bird C.P."/>
            <person name="Bray-Allen S."/>
            <person name="Brown J.Y."/>
            <person name="Brown A.J."/>
            <person name="Buckley D."/>
            <person name="Burton J."/>
            <person name="Bye J."/>
            <person name="Carder C."/>
            <person name="Chapman J.C."/>
            <person name="Clark S.Y."/>
            <person name="Clarke G."/>
            <person name="Clee C."/>
            <person name="Cobley V."/>
            <person name="Collier R.E."/>
            <person name="Corby N."/>
            <person name="Coville G.J."/>
            <person name="Davies J."/>
            <person name="Deadman R."/>
            <person name="Dunn M."/>
            <person name="Earthrowl M."/>
            <person name="Ellington A.G."/>
            <person name="Errington H."/>
            <person name="Frankish A."/>
            <person name="Frankland J."/>
            <person name="French L."/>
            <person name="Garner P."/>
            <person name="Garnett J."/>
            <person name="Gay L."/>
            <person name="Ghori M.R.J."/>
            <person name="Gibson R."/>
            <person name="Gilby L.M."/>
            <person name="Gillett W."/>
            <person name="Glithero R.J."/>
            <person name="Grafham D.V."/>
            <person name="Griffiths C."/>
            <person name="Griffiths-Jones S."/>
            <person name="Grocock R."/>
            <person name="Hammond S."/>
            <person name="Harrison E.S.I."/>
            <person name="Hart E."/>
            <person name="Haugen E."/>
            <person name="Heath P.D."/>
            <person name="Holmes S."/>
            <person name="Holt K."/>
            <person name="Howden P.J."/>
            <person name="Hunt A.R."/>
            <person name="Hunt S.E."/>
            <person name="Hunter G."/>
            <person name="Isherwood J."/>
            <person name="James R."/>
            <person name="Johnson C."/>
            <person name="Johnson D."/>
            <person name="Joy A."/>
            <person name="Kay M."/>
            <person name="Kershaw J.K."/>
            <person name="Kibukawa M."/>
            <person name="Kimberley A.M."/>
            <person name="King A."/>
            <person name="Knights A.J."/>
            <person name="Lad H."/>
            <person name="Laird G."/>
            <person name="Lawlor S."/>
            <person name="Leongamornlert D.A."/>
            <person name="Lloyd D.M."/>
            <person name="Loveland J."/>
            <person name="Lovell J."/>
            <person name="Lush M.J."/>
            <person name="Lyne R."/>
            <person name="Martin S."/>
            <person name="Mashreghi-Mohammadi M."/>
            <person name="Matthews L."/>
            <person name="Matthews N.S.W."/>
            <person name="McLaren S."/>
            <person name="Milne S."/>
            <person name="Mistry S."/>
            <person name="Moore M.J.F."/>
            <person name="Nickerson T."/>
            <person name="O'Dell C.N."/>
            <person name="Oliver K."/>
            <person name="Palmeiri A."/>
            <person name="Palmer S.A."/>
            <person name="Parker A."/>
            <person name="Patel D."/>
            <person name="Pearce A.V."/>
            <person name="Peck A.I."/>
            <person name="Pelan S."/>
            <person name="Phelps K."/>
            <person name="Phillimore B.J."/>
            <person name="Plumb R."/>
            <person name="Rajan J."/>
            <person name="Raymond C."/>
            <person name="Rouse G."/>
            <person name="Saenphimmachak C."/>
            <person name="Sehra H.K."/>
            <person name="Sheridan E."/>
            <person name="Shownkeen R."/>
            <person name="Sims S."/>
            <person name="Skuce C.D."/>
            <person name="Smith M."/>
            <person name="Steward C."/>
            <person name="Subramanian S."/>
            <person name="Sycamore N."/>
            <person name="Tracey A."/>
            <person name="Tromans A."/>
            <person name="Van Helmond Z."/>
            <person name="Wall M."/>
            <person name="Wallis J.M."/>
            <person name="White S."/>
            <person name="Whitehead S.L."/>
            <person name="Wilkinson J.E."/>
            <person name="Willey D.L."/>
            <person name="Williams H."/>
            <person name="Wilming L."/>
            <person name="Wray P.W."/>
            <person name="Wu Z."/>
            <person name="Coulson A."/>
            <person name="Vaudin M."/>
            <person name="Sulston J.E."/>
            <person name="Durbin R.M."/>
            <person name="Hubbard T."/>
            <person name="Wooster R."/>
            <person name="Dunham I."/>
            <person name="Carter N.P."/>
            <person name="McVean G."/>
            <person name="Ross M.T."/>
            <person name="Harrow J."/>
            <person name="Olson M.V."/>
            <person name="Beck S."/>
            <person name="Rogers J."/>
            <person name="Bentley D.R."/>
        </authorList>
    </citation>
    <scope>NUCLEOTIDE SEQUENCE [LARGE SCALE GENOMIC DNA]</scope>
</reference>
<reference key="5">
    <citation type="journal article" date="2004" name="Genome Res.">
        <title>The status, quality, and expansion of the NIH full-length cDNA project: the Mammalian Gene Collection (MGC).</title>
        <authorList>
            <consortium name="The MGC Project Team"/>
        </authorList>
    </citation>
    <scope>NUCLEOTIDE SEQUENCE [LARGE SCALE MRNA] (ISOFORM 1)</scope>
    <scope>VARIANTS SER-203 AND VAL-223</scope>
    <source>
        <tissue>Colon</tissue>
        <tissue>Skin</tissue>
        <tissue>Spleen</tissue>
    </source>
</reference>
<reference key="6">
    <citation type="journal article" date="2007" name="BMC Mol. Biol.">
        <title>Human NCU-G1 can function as a transcription factor and as a nuclear receptor co-activator.</title>
        <authorList>
            <person name="Steffensen K.R."/>
            <person name="Bouzga M."/>
            <person name="Skjeldal F."/>
            <person name="Kasi C."/>
            <person name="Karahasan A."/>
            <person name="Matre V."/>
            <person name="Bakke O."/>
            <person name="Guerin S."/>
            <person name="Eskild W."/>
        </authorList>
    </citation>
    <scope>PUTATIVE FUNCTION</scope>
</reference>
<reference key="7">
    <citation type="journal article" date="2007" name="Traffic">
        <title>Integral and associated lysosomal membrane proteins.</title>
        <authorList>
            <person name="Schroeder B."/>
            <person name="Wrocklage C."/>
            <person name="Pan C."/>
            <person name="Jaeger R."/>
            <person name="Koesters B."/>
            <person name="Schaefer H."/>
            <person name="Elsaesser H.-P."/>
            <person name="Mann M."/>
            <person name="Hasilik A."/>
        </authorList>
    </citation>
    <scope>SUBCELLULAR LOCATION [LARGE SCALE ANALYSIS]</scope>
    <source>
        <tissue>Placenta</tissue>
    </source>
</reference>
<reference key="8">
    <citation type="journal article" date="2009" name="Science">
        <title>A gene network regulating lysosomal biogenesis and function.</title>
        <authorList>
            <person name="Sardiello M."/>
            <person name="Palmieri M."/>
            <person name="di Ronza A."/>
            <person name="Medina D.L."/>
            <person name="Valenza M."/>
            <person name="Gennarino V.A."/>
            <person name="Di Malta C."/>
            <person name="Donaudy F."/>
            <person name="Embrione V."/>
            <person name="Polishchuk R.S."/>
            <person name="Banfi S."/>
            <person name="Parenti G."/>
            <person name="Cattaneo E."/>
            <person name="Ballabio A."/>
        </authorList>
    </citation>
    <scope>SUBCELLULAR LOCATION</scope>
    <scope>INDUCTION</scope>
</reference>
<reference key="9">
    <citation type="journal article" date="2015" name="Proteomics">
        <title>N-terminome analysis of the human mitochondrial proteome.</title>
        <authorList>
            <person name="Vaca Jacome A.S."/>
            <person name="Rabilloud T."/>
            <person name="Schaeffer-Reiss C."/>
            <person name="Rompais M."/>
            <person name="Ayoub D."/>
            <person name="Lane L."/>
            <person name="Bairoch A."/>
            <person name="Van Dorsselaer A."/>
            <person name="Carapito C."/>
        </authorList>
    </citation>
    <scope>IDENTIFICATION BY MASS SPECTROMETRY [LARGE SCALE ANALYSIS]</scope>
</reference>
<protein>
    <recommendedName>
        <fullName evidence="9">Glycosylated lysosomal membrane protein</fullName>
    </recommendedName>
    <alternativeName>
        <fullName evidence="8">Lysosomal protein NCU-G1</fullName>
    </alternativeName>
</protein>
<sequence length="406" mass="43864">MRGSVECTWGWGHCAPSPLLLWTLLLFAAPFGLLGEKTRQVSLEVIPNWLGPLQNLLHIRAVGTNSTLHYVWSSLGPLAVVMVATNTPHSTLSVNWSLLLSPEPDGGLMVLPKDSIQFSSALVFTRLLEFDSTNVSDTAAKPLGRPYPPYSLADFSWNNITDSLDPATLSATFQGHPMNDPTRTFANGSLAFRVQAFSRSSRPAQPPRLLHTADTCQLEVALIGASPRGNRSLFGLEVATLGQGPDCPSMQEQHSIDDEYAPAVFQLDQLLWGSLPSGFAQWRPVAYSQKPGGRESALPCQASPLHPALAYSLPQSPIVRAFFGSQNNFCAFNLTFGASTGPGYWDQHYLSWSMLLGVGFPPVDGLSPLVLGIMAVALGAPGLMLLGGGLVLLLHHKKYSEYQSIN</sequence>
<feature type="signal peptide" evidence="2">
    <location>
        <begin position="1"/>
        <end position="35"/>
    </location>
</feature>
<feature type="chain" id="PRO_0000284484" description="Glycosylated lysosomal membrane protein" evidence="8">
    <location>
        <begin position="36"/>
        <end position="406"/>
    </location>
</feature>
<feature type="topological domain" description="Lumenal" evidence="2">
    <location>
        <begin position="36"/>
        <end position="372"/>
    </location>
</feature>
<feature type="transmembrane region" description="Helical" evidence="2">
    <location>
        <begin position="373"/>
        <end position="393"/>
    </location>
</feature>
<feature type="topological domain" description="Cytoplasmic" evidence="2">
    <location>
        <begin position="394"/>
        <end position="406"/>
    </location>
</feature>
<feature type="short sequence motif" description="Lysosomal targeting motif" evidence="1">
    <location>
        <begin position="402"/>
        <end position="406"/>
    </location>
</feature>
<feature type="glycosylation site" description="N-linked (GlcNAc...) asparagine" evidence="2">
    <location>
        <position position="65"/>
    </location>
</feature>
<feature type="glycosylation site" description="N-linked (GlcNAc...) asparagine" evidence="2">
    <location>
        <position position="134"/>
    </location>
</feature>
<feature type="glycosylation site" description="N-linked (GlcNAc...) asparagine" evidence="2">
    <location>
        <position position="159"/>
    </location>
</feature>
<feature type="glycosylation site" description="N-linked (GlcNAc...) asparagine" evidence="2">
    <location>
        <position position="187"/>
    </location>
</feature>
<feature type="glycosylation site" description="N-linked (GlcNAc...) asparagine" evidence="2">
    <location>
        <position position="230"/>
    </location>
</feature>
<feature type="splice variant" id="VSP_037842" description="In isoform 2." evidence="7">
    <location>
        <begin position="1"/>
        <end position="81"/>
    </location>
</feature>
<feature type="sequence variant" id="VAR_031742" description="In dbSNP:rs1570805." evidence="3">
    <original>V</original>
    <variation>I</variation>
    <location>
        <position position="94"/>
    </location>
</feature>
<feature type="sequence variant" id="VAR_031743" description="In dbSNP:rs10908496." evidence="4">
    <original>P</original>
    <variation>S</variation>
    <location>
        <position position="203"/>
    </location>
</feature>
<feature type="sequence variant" id="VAR_031744" description="In dbSNP:rs10908495." evidence="4">
    <original>I</original>
    <variation>V</variation>
    <location>
        <position position="223"/>
    </location>
</feature>
<evidence type="ECO:0000250" key="1">
    <source>
        <dbReference type="UniProtKB" id="Q9JHJ3"/>
    </source>
</evidence>
<evidence type="ECO:0000255" key="2"/>
<evidence type="ECO:0000269" key="3">
    <source>
    </source>
</evidence>
<evidence type="ECO:0000269" key="4">
    <source>
    </source>
</evidence>
<evidence type="ECO:0000269" key="5">
    <source>
    </source>
</evidence>
<evidence type="ECO:0000269" key="6">
    <source>
    </source>
</evidence>
<evidence type="ECO:0000303" key="7">
    <source>
    </source>
</evidence>
<evidence type="ECO:0000305" key="8"/>
<evidence type="ECO:0000312" key="9">
    <source>
        <dbReference type="HGNC" id="HGNC:29436"/>
    </source>
</evidence>
<name>GLMP_HUMAN</name>
<dbReference type="EMBL" id="AY358450">
    <property type="protein sequence ID" value="AAQ88815.1"/>
    <property type="molecule type" value="mRNA"/>
</dbReference>
<dbReference type="EMBL" id="AK075349">
    <property type="protein sequence ID" value="BAC11561.1"/>
    <property type="molecule type" value="mRNA"/>
</dbReference>
<dbReference type="EMBL" id="AK296157">
    <property type="protein sequence ID" value="BAG58896.1"/>
    <property type="molecule type" value="mRNA"/>
</dbReference>
<dbReference type="EMBL" id="AL589685">
    <property type="status" value="NOT_ANNOTATED_CDS"/>
    <property type="molecule type" value="Genomic_DNA"/>
</dbReference>
<dbReference type="EMBL" id="BC018757">
    <property type="protein sequence ID" value="AAH18757.1"/>
    <property type="molecule type" value="mRNA"/>
</dbReference>
<dbReference type="EMBL" id="BC011575">
    <property type="protein sequence ID" value="AAH11575.1"/>
    <property type="status" value="ALT_INIT"/>
    <property type="molecule type" value="mRNA"/>
</dbReference>
<dbReference type="EMBL" id="BC036340">
    <property type="protein sequence ID" value="AAH36340.1"/>
    <property type="molecule type" value="mRNA"/>
</dbReference>
<dbReference type="CCDS" id="CCDS1139.1">
    <molecule id="Q8WWB7-1"/>
</dbReference>
<dbReference type="CCDS" id="CCDS72947.1">
    <molecule id="Q8WWB7-2"/>
</dbReference>
<dbReference type="RefSeq" id="NP_001243538.1">
    <molecule id="Q8WWB7-2"/>
    <property type="nucleotide sequence ID" value="NM_001256609.2"/>
</dbReference>
<dbReference type="RefSeq" id="NP_653181.1">
    <molecule id="Q8WWB7-1"/>
    <property type="nucleotide sequence ID" value="NM_144580.3"/>
</dbReference>
<dbReference type="SMR" id="Q8WWB7"/>
<dbReference type="BioGRID" id="125204">
    <property type="interactions" value="156"/>
</dbReference>
<dbReference type="FunCoup" id="Q8WWB7">
    <property type="interactions" value="1252"/>
</dbReference>
<dbReference type="IntAct" id="Q8WWB7">
    <property type="interactions" value="82"/>
</dbReference>
<dbReference type="STRING" id="9606.ENSP00000354553"/>
<dbReference type="TCDB" id="2.A.1.53.3">
    <property type="family name" value="the major facilitator superfamily (mfs)"/>
</dbReference>
<dbReference type="GlyConnect" id="794">
    <property type="glycosylation" value="3 N-Linked glycans (2 sites)"/>
</dbReference>
<dbReference type="GlyCosmos" id="Q8WWB7">
    <property type="glycosylation" value="5 sites, 4 glycans"/>
</dbReference>
<dbReference type="GlyGen" id="Q8WWB7">
    <property type="glycosylation" value="6 sites, 11 N-linked glycans (3 sites), 1 O-linked glycan (1 site)"/>
</dbReference>
<dbReference type="iPTMnet" id="Q8WWB7"/>
<dbReference type="PhosphoSitePlus" id="Q8WWB7"/>
<dbReference type="BioMuta" id="GLMP"/>
<dbReference type="DMDM" id="74760578"/>
<dbReference type="jPOST" id="Q8WWB7"/>
<dbReference type="MassIVE" id="Q8WWB7"/>
<dbReference type="PaxDb" id="9606-ENSP00000354553"/>
<dbReference type="PeptideAtlas" id="Q8WWB7"/>
<dbReference type="ProteomicsDB" id="74874">
    <molecule id="Q8WWB7-1"/>
</dbReference>
<dbReference type="ProteomicsDB" id="74875">
    <molecule id="Q8WWB7-2"/>
</dbReference>
<dbReference type="Pumba" id="Q8WWB7"/>
<dbReference type="Antibodypedia" id="34210">
    <property type="antibodies" value="43 antibodies from 11 providers"/>
</dbReference>
<dbReference type="DNASU" id="112770"/>
<dbReference type="Ensembl" id="ENST00000362007.6">
    <molecule id="Q8WWB7-1"/>
    <property type="protein sequence ID" value="ENSP00000354553.1"/>
    <property type="gene ID" value="ENSG00000198715.13"/>
</dbReference>
<dbReference type="Ensembl" id="ENST00000614643.4">
    <molecule id="Q8WWB7-2"/>
    <property type="protein sequence ID" value="ENSP00000480936.1"/>
    <property type="gene ID" value="ENSG00000198715.13"/>
</dbReference>
<dbReference type="Ensembl" id="ENST00000647767.1">
    <molecule id="Q8WWB7-1"/>
    <property type="protein sequence ID" value="ENSP00000497576.1"/>
    <property type="gene ID" value="ENSG00000198715.13"/>
</dbReference>
<dbReference type="GeneID" id="112770"/>
<dbReference type="KEGG" id="hsa:112770"/>
<dbReference type="MANE-Select" id="ENST00000362007.6">
    <property type="protein sequence ID" value="ENSP00000354553.1"/>
    <property type="RefSeq nucleotide sequence ID" value="NM_144580.3"/>
    <property type="RefSeq protein sequence ID" value="NP_653181.1"/>
</dbReference>
<dbReference type="UCSC" id="uc001foh.5">
    <molecule id="Q8WWB7-1"/>
    <property type="organism name" value="human"/>
</dbReference>
<dbReference type="AGR" id="HGNC:29436"/>
<dbReference type="CTD" id="112770"/>
<dbReference type="DisGeNET" id="112770"/>
<dbReference type="GeneCards" id="GLMP"/>
<dbReference type="HGNC" id="HGNC:29436">
    <property type="gene designation" value="GLMP"/>
</dbReference>
<dbReference type="HPA" id="ENSG00000198715">
    <property type="expression patterns" value="Low tissue specificity"/>
</dbReference>
<dbReference type="MIM" id="619958">
    <property type="type" value="gene"/>
</dbReference>
<dbReference type="neXtProt" id="NX_Q8WWB7"/>
<dbReference type="OpenTargets" id="ENSG00000198715"/>
<dbReference type="PharmGKB" id="PA142672533"/>
<dbReference type="VEuPathDB" id="HostDB:ENSG00000198715"/>
<dbReference type="eggNOG" id="ENOG502QSBM">
    <property type="taxonomic scope" value="Eukaryota"/>
</dbReference>
<dbReference type="GeneTree" id="ENSGT00390000005131"/>
<dbReference type="HOGENOM" id="CLU_040225_0_0_1"/>
<dbReference type="InParanoid" id="Q8WWB7"/>
<dbReference type="OMA" id="TLHYLWD"/>
<dbReference type="OrthoDB" id="6264340at2759"/>
<dbReference type="PAN-GO" id="Q8WWB7">
    <property type="GO annotations" value="1 GO annotation based on evolutionary models"/>
</dbReference>
<dbReference type="PhylomeDB" id="Q8WWB7"/>
<dbReference type="TreeFam" id="TF324431"/>
<dbReference type="PathwayCommons" id="Q8WWB7"/>
<dbReference type="SignaLink" id="Q8WWB7"/>
<dbReference type="BioGRID-ORCS" id="112770">
    <property type="hits" value="28 hits in 1162 CRISPR screens"/>
</dbReference>
<dbReference type="ChiTaRS" id="GLMP">
    <property type="organism name" value="human"/>
</dbReference>
<dbReference type="GenomeRNAi" id="112770"/>
<dbReference type="Pharos" id="Q8WWB7">
    <property type="development level" value="Tdark"/>
</dbReference>
<dbReference type="PRO" id="PR:Q8WWB7"/>
<dbReference type="Proteomes" id="UP000005640">
    <property type="component" value="Chromosome 1"/>
</dbReference>
<dbReference type="RNAct" id="Q8WWB7">
    <property type="molecule type" value="protein"/>
</dbReference>
<dbReference type="Bgee" id="ENSG00000198715">
    <property type="expression patterns" value="Expressed in right adrenal gland cortex and 170 other cell types or tissues"/>
</dbReference>
<dbReference type="ExpressionAtlas" id="Q8WWB7">
    <property type="expression patterns" value="baseline and differential"/>
</dbReference>
<dbReference type="GO" id="GO:0005829">
    <property type="term" value="C:cytosol"/>
    <property type="evidence" value="ECO:0000314"/>
    <property type="project" value="BHF-UCL"/>
</dbReference>
<dbReference type="GO" id="GO:0005765">
    <property type="term" value="C:lysosomal membrane"/>
    <property type="evidence" value="ECO:0007669"/>
    <property type="project" value="UniProtKB-SubCell"/>
</dbReference>
<dbReference type="GO" id="GO:0005764">
    <property type="term" value="C:lysosome"/>
    <property type="evidence" value="ECO:0000314"/>
    <property type="project" value="UniProtKB"/>
</dbReference>
<dbReference type="GO" id="GO:0016020">
    <property type="term" value="C:membrane"/>
    <property type="evidence" value="ECO:0000250"/>
    <property type="project" value="UniProtKB"/>
</dbReference>
<dbReference type="GO" id="GO:0005634">
    <property type="term" value="C:nucleus"/>
    <property type="evidence" value="ECO:0000314"/>
    <property type="project" value="BHF-UCL"/>
</dbReference>
<dbReference type="GO" id="GO:0045944">
    <property type="term" value="P:positive regulation of transcription by RNA polymerase II"/>
    <property type="evidence" value="ECO:0000315"/>
    <property type="project" value="BHF-UCL"/>
</dbReference>
<dbReference type="GO" id="GO:0061462">
    <property type="term" value="P:protein localization to lysosome"/>
    <property type="evidence" value="ECO:0000250"/>
    <property type="project" value="UniProtKB"/>
</dbReference>
<dbReference type="GO" id="GO:0050821">
    <property type="term" value="P:protein stabilization"/>
    <property type="evidence" value="ECO:0000250"/>
    <property type="project" value="UniProtKB"/>
</dbReference>
<dbReference type="InterPro" id="IPR029382">
    <property type="entry name" value="NCU-G1"/>
</dbReference>
<dbReference type="PANTHER" id="PTHR31981">
    <property type="entry name" value="GLYCOSYLATED LYSOSOMAL MEMBRANE PROTEIN"/>
    <property type="match status" value="1"/>
</dbReference>
<dbReference type="PANTHER" id="PTHR31981:SF1">
    <property type="entry name" value="GLYCOSYLATED LYSOSOMAL MEMBRANE PROTEIN"/>
    <property type="match status" value="1"/>
</dbReference>
<dbReference type="Pfam" id="PF15065">
    <property type="entry name" value="NCU-G1"/>
    <property type="match status" value="1"/>
</dbReference>
<organism>
    <name type="scientific">Homo sapiens</name>
    <name type="common">Human</name>
    <dbReference type="NCBI Taxonomy" id="9606"/>
    <lineage>
        <taxon>Eukaryota</taxon>
        <taxon>Metazoa</taxon>
        <taxon>Chordata</taxon>
        <taxon>Craniata</taxon>
        <taxon>Vertebrata</taxon>
        <taxon>Euteleostomi</taxon>
        <taxon>Mammalia</taxon>
        <taxon>Eutheria</taxon>
        <taxon>Euarchontoglires</taxon>
        <taxon>Primates</taxon>
        <taxon>Haplorrhini</taxon>
        <taxon>Catarrhini</taxon>
        <taxon>Hominidae</taxon>
        <taxon>Homo</taxon>
    </lineage>
</organism>
<proteinExistence type="evidence at protein level"/>